<keyword id="KW-0067">ATP-binding</keyword>
<keyword id="KW-0997">Cell inner membrane</keyword>
<keyword id="KW-1003">Cell membrane</keyword>
<keyword id="KW-0472">Membrane</keyword>
<keyword id="KW-0547">Nucleotide-binding</keyword>
<keyword id="KW-1185">Reference proteome</keyword>
<keyword id="KW-1278">Translocase</keyword>
<keyword id="KW-0813">Transport</keyword>
<evidence type="ECO:0000255" key="1">
    <source>
        <dbReference type="HAMAP-Rule" id="MF_01714"/>
    </source>
</evidence>
<dbReference type="EC" id="7.6.2.7" evidence="1"/>
<dbReference type="EMBL" id="CP000034">
    <property type="protein sequence ID" value="ABB60711.1"/>
    <property type="molecule type" value="Genomic_DNA"/>
</dbReference>
<dbReference type="RefSeq" id="WP_000939378.1">
    <property type="nucleotide sequence ID" value="NC_007606.1"/>
</dbReference>
<dbReference type="RefSeq" id="YP_402200.1">
    <property type="nucleotide sequence ID" value="NC_007606.1"/>
</dbReference>
<dbReference type="SMR" id="Q32IZ6"/>
<dbReference type="STRING" id="300267.SDY_0504"/>
<dbReference type="EnsemblBacteria" id="ABB60711">
    <property type="protein sequence ID" value="ABB60711"/>
    <property type="gene ID" value="SDY_0504"/>
</dbReference>
<dbReference type="KEGG" id="sdy:SDY_0504"/>
<dbReference type="PATRIC" id="fig|300267.13.peg.595"/>
<dbReference type="HOGENOM" id="CLU_000604_1_22_6"/>
<dbReference type="Proteomes" id="UP000002716">
    <property type="component" value="Chromosome"/>
</dbReference>
<dbReference type="GO" id="GO:0005886">
    <property type="term" value="C:plasma membrane"/>
    <property type="evidence" value="ECO:0007669"/>
    <property type="project" value="UniProtKB-SubCell"/>
</dbReference>
<dbReference type="GO" id="GO:0015411">
    <property type="term" value="F:ABC-type taurine transporter transporter activity"/>
    <property type="evidence" value="ECO:0007669"/>
    <property type="project" value="UniProtKB-EC"/>
</dbReference>
<dbReference type="GO" id="GO:0005524">
    <property type="term" value="F:ATP binding"/>
    <property type="evidence" value="ECO:0007669"/>
    <property type="project" value="UniProtKB-KW"/>
</dbReference>
<dbReference type="GO" id="GO:0016887">
    <property type="term" value="F:ATP hydrolysis activity"/>
    <property type="evidence" value="ECO:0007669"/>
    <property type="project" value="InterPro"/>
</dbReference>
<dbReference type="CDD" id="cd03293">
    <property type="entry name" value="ABC_NrtD_SsuB_transporters"/>
    <property type="match status" value="1"/>
</dbReference>
<dbReference type="FunFam" id="3.40.50.300:FF:000653">
    <property type="entry name" value="Aliphatic sulfonates import ATP-binding protein SsuB"/>
    <property type="match status" value="1"/>
</dbReference>
<dbReference type="Gene3D" id="3.40.50.300">
    <property type="entry name" value="P-loop containing nucleotide triphosphate hydrolases"/>
    <property type="match status" value="1"/>
</dbReference>
<dbReference type="InterPro" id="IPR003593">
    <property type="entry name" value="AAA+_ATPase"/>
</dbReference>
<dbReference type="InterPro" id="IPR003439">
    <property type="entry name" value="ABC_transporter-like_ATP-bd"/>
</dbReference>
<dbReference type="InterPro" id="IPR017871">
    <property type="entry name" value="ABC_transporter-like_CS"/>
</dbReference>
<dbReference type="InterPro" id="IPR050166">
    <property type="entry name" value="ABC_transporter_ATP-bind"/>
</dbReference>
<dbReference type="InterPro" id="IPR027417">
    <property type="entry name" value="P-loop_NTPase"/>
</dbReference>
<dbReference type="NCBIfam" id="NF008421">
    <property type="entry name" value="PRK11248.1"/>
    <property type="match status" value="1"/>
</dbReference>
<dbReference type="PANTHER" id="PTHR42788:SF18">
    <property type="entry name" value="TAURINE IMPORT ATP-BINDING PROTEIN TAUB"/>
    <property type="match status" value="1"/>
</dbReference>
<dbReference type="PANTHER" id="PTHR42788">
    <property type="entry name" value="TAURINE IMPORT ATP-BINDING PROTEIN-RELATED"/>
    <property type="match status" value="1"/>
</dbReference>
<dbReference type="Pfam" id="PF00005">
    <property type="entry name" value="ABC_tran"/>
    <property type="match status" value="1"/>
</dbReference>
<dbReference type="SMART" id="SM00382">
    <property type="entry name" value="AAA"/>
    <property type="match status" value="1"/>
</dbReference>
<dbReference type="SUPFAM" id="SSF52540">
    <property type="entry name" value="P-loop containing nucleoside triphosphate hydrolases"/>
    <property type="match status" value="1"/>
</dbReference>
<dbReference type="PROSITE" id="PS00211">
    <property type="entry name" value="ABC_TRANSPORTER_1"/>
    <property type="match status" value="1"/>
</dbReference>
<dbReference type="PROSITE" id="PS50893">
    <property type="entry name" value="ABC_TRANSPORTER_2"/>
    <property type="match status" value="1"/>
</dbReference>
<dbReference type="PROSITE" id="PS51250">
    <property type="entry name" value="TAUB"/>
    <property type="match status" value="1"/>
</dbReference>
<name>TAUB_SHIDS</name>
<proteinExistence type="inferred from homology"/>
<comment type="function">
    <text evidence="1">Part of the ABC transporter complex TauABC involved in taurine import. Responsible for energy coupling to the transport system.</text>
</comment>
<comment type="catalytic activity">
    <reaction evidence="1">
        <text>taurine(out) + ATP + H2O = taurine(in) + ADP + phosphate + H(+)</text>
        <dbReference type="Rhea" id="RHEA:14613"/>
        <dbReference type="ChEBI" id="CHEBI:15377"/>
        <dbReference type="ChEBI" id="CHEBI:15378"/>
        <dbReference type="ChEBI" id="CHEBI:30616"/>
        <dbReference type="ChEBI" id="CHEBI:43474"/>
        <dbReference type="ChEBI" id="CHEBI:456216"/>
        <dbReference type="ChEBI" id="CHEBI:507393"/>
        <dbReference type="EC" id="7.6.2.7"/>
    </reaction>
</comment>
<comment type="subunit">
    <text evidence="1">The complex is composed of two ATP-binding proteins (TauB), two transmembrane proteins (TauC) and a solute-binding protein (TauA).</text>
</comment>
<comment type="subcellular location">
    <subcellularLocation>
        <location evidence="1">Cell inner membrane</location>
        <topology evidence="1">Peripheral membrane protein</topology>
    </subcellularLocation>
</comment>
<comment type="similarity">
    <text evidence="1">Belongs to the ABC transporter superfamily. Taurine importer (TC 3.A.1.17.1) family.</text>
</comment>
<accession>Q32IZ6</accession>
<feature type="chain" id="PRO_0000275844" description="Taurine import ATP-binding protein TauB">
    <location>
        <begin position="1"/>
        <end position="255"/>
    </location>
</feature>
<feature type="domain" description="ABC transporter" evidence="1">
    <location>
        <begin position="2"/>
        <end position="229"/>
    </location>
</feature>
<feature type="binding site" evidence="1">
    <location>
        <begin position="34"/>
        <end position="41"/>
    </location>
    <ligand>
        <name>ATP</name>
        <dbReference type="ChEBI" id="CHEBI:30616"/>
    </ligand>
</feature>
<gene>
    <name evidence="1" type="primary">tauB</name>
    <name type="ordered locus">SDY_0504</name>
</gene>
<organism>
    <name type="scientific">Shigella dysenteriae serotype 1 (strain Sd197)</name>
    <dbReference type="NCBI Taxonomy" id="300267"/>
    <lineage>
        <taxon>Bacteria</taxon>
        <taxon>Pseudomonadati</taxon>
        <taxon>Pseudomonadota</taxon>
        <taxon>Gammaproteobacteria</taxon>
        <taxon>Enterobacterales</taxon>
        <taxon>Enterobacteriaceae</taxon>
        <taxon>Shigella</taxon>
    </lineage>
</organism>
<protein>
    <recommendedName>
        <fullName evidence="1">Taurine import ATP-binding protein TauB</fullName>
        <ecNumber evidence="1">7.6.2.7</ecNumber>
    </recommendedName>
</protein>
<sequence>MLQISHLYADYGGKPALEDINLTLESGELLVVLGPSGCGKTTLLNLIAGFVPYQHGSIQLAGKRIEGPGAERGVVFQNEGLLPWRNVQDNVAFGLQLAGIEKMQRLEIAYQMLKKVGLEGAEKRYIWQLSGGQRQRVGIARALAANPQLLLLDEPFGALDAFTRDQMQTLLLKLWQETGKQVLLITHDIEEAVFMATELVLLSSGLGRVLERLPLNFARRFVAGESSRSIKSDPQFIAMREYVLSRVFEQREAFS</sequence>
<reference key="1">
    <citation type="journal article" date="2005" name="Nucleic Acids Res.">
        <title>Genome dynamics and diversity of Shigella species, the etiologic agents of bacillary dysentery.</title>
        <authorList>
            <person name="Yang F."/>
            <person name="Yang J."/>
            <person name="Zhang X."/>
            <person name="Chen L."/>
            <person name="Jiang Y."/>
            <person name="Yan Y."/>
            <person name="Tang X."/>
            <person name="Wang J."/>
            <person name="Xiong Z."/>
            <person name="Dong J."/>
            <person name="Xue Y."/>
            <person name="Zhu Y."/>
            <person name="Xu X."/>
            <person name="Sun L."/>
            <person name="Chen S."/>
            <person name="Nie H."/>
            <person name="Peng J."/>
            <person name="Xu J."/>
            <person name="Wang Y."/>
            <person name="Yuan Z."/>
            <person name="Wen Y."/>
            <person name="Yao Z."/>
            <person name="Shen Y."/>
            <person name="Qiang B."/>
            <person name="Hou Y."/>
            <person name="Yu J."/>
            <person name="Jin Q."/>
        </authorList>
    </citation>
    <scope>NUCLEOTIDE SEQUENCE [LARGE SCALE GENOMIC DNA]</scope>
    <source>
        <strain>Sd197</strain>
    </source>
</reference>